<proteinExistence type="inferred from homology"/>
<reference key="1">
    <citation type="journal article" date="2010" name="BMC Genomics">
        <title>Comparative venom gland transcriptome analysis of the scorpion Lychas mucronatus reveals intraspecific toxic gene diversity and new venomous components.</title>
        <authorList>
            <person name="Zhao R."/>
            <person name="Ma Y."/>
            <person name="He Y."/>
            <person name="Di Z."/>
            <person name="Wu Y.-L."/>
            <person name="Cao Z.-J."/>
            <person name="Li W.-X."/>
        </authorList>
    </citation>
    <scope>NUCLEOTIDE SEQUENCE [MRNA]</scope>
    <source>
        <strain>Yunnan</strain>
        <tissue>Venom gland</tissue>
    </source>
</reference>
<protein>
    <recommendedName>
        <fullName>Venom protein 22.1</fullName>
    </recommendedName>
</protein>
<evidence type="ECO:0000250" key="1"/>
<evidence type="ECO:0000255" key="2"/>
<evidence type="ECO:0000305" key="3"/>
<comment type="subcellular location">
    <subcellularLocation>
        <location evidence="1">Secreted</location>
    </subcellularLocation>
</comment>
<comment type="tissue specificity">
    <text evidence="3">Expressed by the venom gland.</text>
</comment>
<comment type="similarity">
    <text evidence="3">Belongs to the non-disulfide-bridged peptide (NDBP) superfamily. Long chain multifunctional peptide (group 2) family.</text>
</comment>
<feature type="signal peptide" evidence="2">
    <location>
        <begin position="1"/>
        <end position="18"/>
    </location>
</feature>
<feature type="chain" id="PRO_0000403895" description="Venom protein 22.1">
    <location>
        <begin position="19"/>
        <end position="61"/>
    </location>
</feature>
<dbReference type="EMBL" id="GT028760">
    <property type="status" value="NOT_ANNOTATED_CDS"/>
    <property type="molecule type" value="mRNA"/>
</dbReference>
<dbReference type="SMR" id="P0CJ04"/>
<dbReference type="GO" id="GO:0005576">
    <property type="term" value="C:extracellular region"/>
    <property type="evidence" value="ECO:0007669"/>
    <property type="project" value="UniProtKB-SubCell"/>
</dbReference>
<name>NDBR_LYCMC</name>
<accession>P0CJ04</accession>
<sequence length="61" mass="7525">MDIKGLLVILFFVLLITGEVENMKPKKHKYKYKNRKRFLENFEEPLQKRDMNEESYELFNQ</sequence>
<organism>
    <name type="scientific">Lychas mucronatus</name>
    <name type="common">Chinese swimming scorpion</name>
    <dbReference type="NCBI Taxonomy" id="172552"/>
    <lineage>
        <taxon>Eukaryota</taxon>
        <taxon>Metazoa</taxon>
        <taxon>Ecdysozoa</taxon>
        <taxon>Arthropoda</taxon>
        <taxon>Chelicerata</taxon>
        <taxon>Arachnida</taxon>
        <taxon>Scorpiones</taxon>
        <taxon>Buthida</taxon>
        <taxon>Buthoidea</taxon>
        <taxon>Buthidae</taxon>
        <taxon>Lychas</taxon>
    </lineage>
</organism>
<keyword id="KW-0964">Secreted</keyword>
<keyword id="KW-0732">Signal</keyword>